<accession>P24257</accession>
<gene>
    <name type="primary">wnt1</name>
    <name type="synonym">int-1</name>
    <name type="synonym">wnt-1</name>
</gene>
<comment type="function">
    <text evidence="1 8 9 10">Ligand for members of the frizzled family of seven transmembrane receptors. Acts in the canonical Wnt signaling pathway by promoting beta-catenin-dependent transcriptional activation (By similarity). Involved in neurogenesis. Performs a partially redundant function with wnt10b in the formation of the midbrain-hindbrain boundary (MHB) organizer. In the hindbrain, mediates lateral inhibition of boundary cell specification, probably via up-regulation of proneural and Delta gene expression in non-boundary cells; localized expression of wnt1 in boundary cells is maintained via rfng-mediated modulation of Notch activity.</text>
</comment>
<comment type="subcellular location">
    <subcellularLocation>
        <location evidence="1">Secreted</location>
        <location evidence="1">Extracellular space</location>
        <location evidence="1">Extracellular matrix</location>
    </subcellularLocation>
    <subcellularLocation>
        <location evidence="1">Secreted</location>
    </subcellularLocation>
</comment>
<comment type="developmental stage">
    <text evidence="7 8 9 11">Expressed throughout embryogenesis (PubMed:2009859). First detected at around 8 hours post-fertilization (hpf) within the prospective midbrain-hindbrain boundary (MHB) (PubMed:15366005). By 10 hpf, expressed in two stripes that converge at the dorsal midline (PubMed:12591239). During somitogenesis, this expression domain extends to the prospective epiphysis and the dorsal midline of the hindbrain; unlike wnt10b, wnt1 is not detected in the prospective cerebellum (PubMed:12591239). Expressed in the presumptive midbrain-hindbrain region at 22 hpf, expressed in the developing midbrain-hindbrain region at 24 hpf (PubMed:11376490). The hindbrain domain bifurcates along the midline to form two dorsolateral columns with transverse bands of up-regulation at rhombomere boundaries; these are refined into stripes which are maintained at least until 48 hpf (PubMed:15366005). At 30 hpf, expressed in the epiphysis, the dorsal midline of the optic tectum, the anterior half of the MHB constriction and in the hindbrain walls (PubMed:12591239).</text>
</comment>
<comment type="PTM">
    <text evidence="3 4">Palmitoleoylation is required for efficient binding to frizzled receptors. Palmitoleoylation is necessary for proper trafficking to cell surface (By similarity). Depalmitoleoylated by NOTUM, leading to inhibit Wnt signaling pathway (By similarity).</text>
</comment>
<comment type="disruption phenotype">
    <text evidence="10">Morpholino knockdown results in broadening of hindbrain boundary marker expression.</text>
</comment>
<comment type="similarity">
    <text evidence="12">Belongs to the Wnt family.</text>
</comment>
<reference key="1">
    <citation type="journal article" date="1991" name="EMBO J.">
        <title>Genomic structure and restricted neural expression of the zebrafish wnt-1 (int-1) gene.</title>
        <authorList>
            <person name="Molven A."/>
            <person name="Njolstad P.R."/>
            <person name="Fjose A."/>
        </authorList>
    </citation>
    <scope>NUCLEOTIDE SEQUENCE [GENOMIC DNA]</scope>
    <scope>DEVELOPMENTAL STAGE</scope>
</reference>
<reference key="2">
    <citation type="journal article" date="2001" name="Dev. Dyn.">
        <title>Zebrafish E-cadherin: expression during early embryogenesis and regulation during brain development.</title>
        <authorList>
            <person name="Babb S.G."/>
            <person name="Barnett J."/>
            <person name="Doedens A.L."/>
            <person name="Cobb N."/>
            <person name="Liu Q."/>
            <person name="Sorkin B.C."/>
            <person name="Yelick P.C."/>
            <person name="Raymond P.A."/>
            <person name="Marrs J.A."/>
        </authorList>
    </citation>
    <scope>DEVELOPMENTAL STAGE</scope>
</reference>
<reference key="3">
    <citation type="journal article" date="2003" name="Dev. Biol.">
        <title>Wnt1 and wnt10b function redundantly at the zebrafish midbrain-hindbrain boundary.</title>
        <authorList>
            <person name="Lekven A.C."/>
            <person name="Buckles G.R."/>
            <person name="Kostakis N."/>
            <person name="Moon R.T."/>
        </authorList>
    </citation>
    <scope>FUNCTION</scope>
    <scope>DEVELOPMENTAL STAGE</scope>
</reference>
<reference key="4">
    <citation type="journal article" date="2004" name="Dev. Dyn.">
        <title>Rhombomere boundaries are Wnt signaling centers that regulate metameric patterning in the zebrafish hindbrain.</title>
        <authorList>
            <person name="Riley B.B."/>
            <person name="Chiang M.-Y."/>
            <person name="Storch E.M."/>
            <person name="Heck R."/>
            <person name="Buckles G.R."/>
            <person name="Lekven A.C."/>
        </authorList>
    </citation>
    <scope>FUNCTION</scope>
    <scope>DEVELOPMENTAL STAGE</scope>
</reference>
<reference key="5">
    <citation type="journal article" date="2005" name="Development">
        <title>Wnt1 regulates neurogenesis and mediates lateral inhibition of boundary cell specification in the zebrafish hindbrain.</title>
        <authorList>
            <person name="Amoyel M."/>
            <person name="Cheng Y.-C."/>
            <person name="Jiang Y.-J."/>
            <person name="Wilkinson D.G."/>
        </authorList>
    </citation>
    <scope>FUNCTION</scope>
    <scope>DISRUPTION PHENOTYPE</scope>
</reference>
<keyword id="KW-0217">Developmental protein</keyword>
<keyword id="KW-0221">Differentiation</keyword>
<keyword id="KW-1015">Disulfide bond</keyword>
<keyword id="KW-0272">Extracellular matrix</keyword>
<keyword id="KW-0325">Glycoprotein</keyword>
<keyword id="KW-0449">Lipoprotein</keyword>
<keyword id="KW-0524">Neurogenesis</keyword>
<keyword id="KW-1185">Reference proteome</keyword>
<keyword id="KW-0964">Secreted</keyword>
<keyword id="KW-0732">Signal</keyword>
<keyword id="KW-0879">Wnt signaling pathway</keyword>
<name>WNT1_DANRE</name>
<organism>
    <name type="scientific">Danio rerio</name>
    <name type="common">Zebrafish</name>
    <name type="synonym">Brachydanio rerio</name>
    <dbReference type="NCBI Taxonomy" id="7955"/>
    <lineage>
        <taxon>Eukaryota</taxon>
        <taxon>Metazoa</taxon>
        <taxon>Chordata</taxon>
        <taxon>Craniata</taxon>
        <taxon>Vertebrata</taxon>
        <taxon>Euteleostomi</taxon>
        <taxon>Actinopterygii</taxon>
        <taxon>Neopterygii</taxon>
        <taxon>Teleostei</taxon>
        <taxon>Ostariophysi</taxon>
        <taxon>Cypriniformes</taxon>
        <taxon>Danionidae</taxon>
        <taxon>Danioninae</taxon>
        <taxon>Danio</taxon>
    </lineage>
</organism>
<feature type="signal peptide" evidence="5">
    <location>
        <begin position="1"/>
        <end position="19"/>
    </location>
</feature>
<feature type="chain" id="PRO_0000041408" description="Protein Wnt-1">
    <location>
        <begin position="20"/>
        <end position="370"/>
    </location>
</feature>
<feature type="region of interest" description="Disordered" evidence="6">
    <location>
        <begin position="261"/>
        <end position="282"/>
    </location>
</feature>
<feature type="compositionally biased region" description="Basic and acidic residues" evidence="6">
    <location>
        <begin position="267"/>
        <end position="280"/>
    </location>
</feature>
<feature type="lipid moiety-binding region" description="O-palmitoleoyl serine; by PORCN" evidence="4">
    <location>
        <position position="223"/>
    </location>
</feature>
<feature type="glycosylation site" description="N-linked (GlcNAc...) asparagine" evidence="5">
    <location>
        <position position="28"/>
    </location>
</feature>
<feature type="glycosylation site" description="N-linked (GlcNAc...) asparagine" evidence="5">
    <location>
        <position position="316"/>
    </location>
</feature>
<feature type="glycosylation site" description="N-linked (GlcNAc...) asparagine" evidence="5">
    <location>
        <position position="359"/>
    </location>
</feature>
<feature type="disulfide bond" evidence="2">
    <location>
        <begin position="92"/>
        <end position="103"/>
    </location>
</feature>
<feature type="disulfide bond" evidence="2">
    <location>
        <begin position="142"/>
        <end position="150"/>
    </location>
</feature>
<feature type="disulfide bond" evidence="2">
    <location>
        <begin position="152"/>
        <end position="169"/>
    </location>
</feature>
<feature type="disulfide bond" evidence="2">
    <location>
        <begin position="217"/>
        <end position="231"/>
    </location>
</feature>
<feature type="disulfide bond" evidence="2">
    <location>
        <begin position="219"/>
        <end position="226"/>
    </location>
</feature>
<feature type="disulfide bond" evidence="2">
    <location>
        <begin position="299"/>
        <end position="330"/>
    </location>
</feature>
<feature type="disulfide bond" evidence="2">
    <location>
        <begin position="315"/>
        <end position="325"/>
    </location>
</feature>
<feature type="disulfide bond" evidence="2">
    <location>
        <begin position="329"/>
        <end position="369"/>
    </location>
</feature>
<feature type="disulfide bond" evidence="2">
    <location>
        <begin position="345"/>
        <end position="360"/>
    </location>
</feature>
<feature type="disulfide bond" evidence="2">
    <location>
        <begin position="347"/>
        <end position="357"/>
    </location>
</feature>
<feature type="disulfide bond" evidence="2">
    <location>
        <begin position="352"/>
        <end position="353"/>
    </location>
</feature>
<proteinExistence type="evidence at transcript level"/>
<dbReference type="EMBL" id="X58880">
    <property type="protein sequence ID" value="CAA41687.1"/>
    <property type="molecule type" value="Genomic_DNA"/>
</dbReference>
<dbReference type="EMBL" id="X58881">
    <property type="protein sequence ID" value="CAA41687.1"/>
    <property type="status" value="JOINED"/>
    <property type="molecule type" value="Genomic_DNA"/>
</dbReference>
<dbReference type="EMBL" id="X58882">
    <property type="protein sequence ID" value="CAA41687.1"/>
    <property type="status" value="JOINED"/>
    <property type="molecule type" value="Genomic_DNA"/>
</dbReference>
<dbReference type="EMBL" id="X58883">
    <property type="protein sequence ID" value="CAA41687.1"/>
    <property type="status" value="JOINED"/>
    <property type="molecule type" value="Genomic_DNA"/>
</dbReference>
<dbReference type="PIR" id="S15013">
    <property type="entry name" value="S15013"/>
</dbReference>
<dbReference type="RefSeq" id="NP_001188327.1">
    <property type="nucleotide sequence ID" value="NM_001201398.1"/>
</dbReference>
<dbReference type="SMR" id="P24257"/>
<dbReference type="FunCoup" id="P24257">
    <property type="interactions" value="1291"/>
</dbReference>
<dbReference type="STRING" id="7955.ENSDARP00000072397"/>
<dbReference type="GlyCosmos" id="P24257">
    <property type="glycosylation" value="3 sites, No reported glycans"/>
</dbReference>
<dbReference type="PaxDb" id="7955-ENSDARP00000110057"/>
<dbReference type="Ensembl" id="ENSDART00000077931">
    <property type="protein sequence ID" value="ENSDARP00000072397"/>
    <property type="gene ID" value="ENSDARG00000055554"/>
</dbReference>
<dbReference type="GeneID" id="30128"/>
<dbReference type="KEGG" id="dre:30128"/>
<dbReference type="AGR" id="ZFIN:ZDB-GENE-980526-526"/>
<dbReference type="CTD" id="7471"/>
<dbReference type="ZFIN" id="ZDB-GENE-980526-526">
    <property type="gene designation" value="wnt1"/>
</dbReference>
<dbReference type="eggNOG" id="KOG3913">
    <property type="taxonomic scope" value="Eukaryota"/>
</dbReference>
<dbReference type="HOGENOM" id="CLU_033039_1_1_1"/>
<dbReference type="InParanoid" id="P24257"/>
<dbReference type="OMA" id="NDHMPDI"/>
<dbReference type="OrthoDB" id="5945655at2759"/>
<dbReference type="PhylomeDB" id="P24257"/>
<dbReference type="TreeFam" id="TF105310"/>
<dbReference type="Reactome" id="R-DRE-3238698">
    <property type="pathway name" value="WNT ligand biogenesis and trafficking"/>
</dbReference>
<dbReference type="Reactome" id="R-DRE-4086400">
    <property type="pathway name" value="PCP/CE pathway"/>
</dbReference>
<dbReference type="Reactome" id="R-DRE-4641262">
    <property type="pathway name" value="Disassembly of the destruction complex and recruitment of AXIN to the membrane"/>
</dbReference>
<dbReference type="PRO" id="PR:P24257"/>
<dbReference type="Proteomes" id="UP000000437">
    <property type="component" value="Chromosome 23"/>
</dbReference>
<dbReference type="Bgee" id="ENSDARG00000055554">
    <property type="expression patterns" value="Expressed in midbrain-hindbrain boundary and 57 other cell types or tissues"/>
</dbReference>
<dbReference type="ExpressionAtlas" id="P24257">
    <property type="expression patterns" value="baseline"/>
</dbReference>
<dbReference type="GO" id="GO:0005615">
    <property type="term" value="C:extracellular space"/>
    <property type="evidence" value="ECO:0000318"/>
    <property type="project" value="GO_Central"/>
</dbReference>
<dbReference type="GO" id="GO:0005125">
    <property type="term" value="F:cytokine activity"/>
    <property type="evidence" value="ECO:0000318"/>
    <property type="project" value="GO_Central"/>
</dbReference>
<dbReference type="GO" id="GO:0005109">
    <property type="term" value="F:frizzled binding"/>
    <property type="evidence" value="ECO:0000318"/>
    <property type="project" value="GO_Central"/>
</dbReference>
<dbReference type="GO" id="GO:0035284">
    <property type="term" value="P:brain segmentation"/>
    <property type="evidence" value="ECO:0000315"/>
    <property type="project" value="ZFIN"/>
</dbReference>
<dbReference type="GO" id="GO:0060070">
    <property type="term" value="P:canonical Wnt signaling pathway"/>
    <property type="evidence" value="ECO:0000318"/>
    <property type="project" value="GO_Central"/>
</dbReference>
<dbReference type="GO" id="GO:0045165">
    <property type="term" value="P:cell fate commitment"/>
    <property type="evidence" value="ECO:0000318"/>
    <property type="project" value="GO_Central"/>
</dbReference>
<dbReference type="GO" id="GO:0021587">
    <property type="term" value="P:cerebellum morphogenesis"/>
    <property type="evidence" value="ECO:0000315"/>
    <property type="project" value="ZFIN"/>
</dbReference>
<dbReference type="GO" id="GO:0021592">
    <property type="term" value="P:fourth ventricle development"/>
    <property type="evidence" value="ECO:0000315"/>
    <property type="project" value="ZFIN"/>
</dbReference>
<dbReference type="GO" id="GO:0030902">
    <property type="term" value="P:hindbrain development"/>
    <property type="evidence" value="ECO:0000315"/>
    <property type="project" value="ZFIN"/>
</dbReference>
<dbReference type="GO" id="GO:0030917">
    <property type="term" value="P:midbrain-hindbrain boundary development"/>
    <property type="evidence" value="ECO:0000316"/>
    <property type="project" value="ZFIN"/>
</dbReference>
<dbReference type="GO" id="GO:0030182">
    <property type="term" value="P:neuron differentiation"/>
    <property type="evidence" value="ECO:0000318"/>
    <property type="project" value="GO_Central"/>
</dbReference>
<dbReference type="CDD" id="cd19333">
    <property type="entry name" value="Wnt_Wnt1"/>
    <property type="match status" value="1"/>
</dbReference>
<dbReference type="FunFam" id="3.30.2460.20:FF:000001">
    <property type="entry name" value="Wnt homolog"/>
    <property type="match status" value="1"/>
</dbReference>
<dbReference type="Gene3D" id="3.30.2460.20">
    <property type="match status" value="1"/>
</dbReference>
<dbReference type="InterPro" id="IPR005817">
    <property type="entry name" value="Wnt"/>
</dbReference>
<dbReference type="InterPro" id="IPR009139">
    <property type="entry name" value="Wnt1"/>
</dbReference>
<dbReference type="InterPro" id="IPR043158">
    <property type="entry name" value="Wnt_C"/>
</dbReference>
<dbReference type="InterPro" id="IPR018161">
    <property type="entry name" value="Wnt_CS"/>
</dbReference>
<dbReference type="PANTHER" id="PTHR12027:SF91">
    <property type="entry name" value="PROTO-ONCOGENE WNT-1"/>
    <property type="match status" value="1"/>
</dbReference>
<dbReference type="PANTHER" id="PTHR12027">
    <property type="entry name" value="WNT RELATED"/>
    <property type="match status" value="1"/>
</dbReference>
<dbReference type="Pfam" id="PF00110">
    <property type="entry name" value="wnt"/>
    <property type="match status" value="1"/>
</dbReference>
<dbReference type="PRINTS" id="PR01841">
    <property type="entry name" value="WNT1PROTEIN"/>
</dbReference>
<dbReference type="PRINTS" id="PR01349">
    <property type="entry name" value="WNTPROTEIN"/>
</dbReference>
<dbReference type="SMART" id="SM00097">
    <property type="entry name" value="WNT1"/>
    <property type="match status" value="1"/>
</dbReference>
<dbReference type="PROSITE" id="PS00246">
    <property type="entry name" value="WNT1"/>
    <property type="match status" value="1"/>
</dbReference>
<evidence type="ECO:0000250" key="1">
    <source>
        <dbReference type="UniProtKB" id="P04628"/>
    </source>
</evidence>
<evidence type="ECO:0000250" key="2">
    <source>
        <dbReference type="UniProtKB" id="P28026"/>
    </source>
</evidence>
<evidence type="ECO:0000250" key="3">
    <source>
        <dbReference type="UniProtKB" id="P56704"/>
    </source>
</evidence>
<evidence type="ECO:0000250" key="4">
    <source>
        <dbReference type="UniProtKB" id="Q91029"/>
    </source>
</evidence>
<evidence type="ECO:0000255" key="5"/>
<evidence type="ECO:0000256" key="6">
    <source>
        <dbReference type="SAM" id="MobiDB-lite"/>
    </source>
</evidence>
<evidence type="ECO:0000269" key="7">
    <source>
    </source>
</evidence>
<evidence type="ECO:0000269" key="8">
    <source>
    </source>
</evidence>
<evidence type="ECO:0000269" key="9">
    <source>
    </source>
</evidence>
<evidence type="ECO:0000269" key="10">
    <source>
    </source>
</evidence>
<evidence type="ECO:0000269" key="11">
    <source>
    </source>
</evidence>
<evidence type="ECO:0000305" key="12"/>
<protein>
    <recommendedName>
        <fullName>Protein Wnt-1</fullName>
    </recommendedName>
</protein>
<sequence>MRVLALLLAVKAACVLLVSSLTGTGAVNNSGRWWGIVNVASSGNLLTNSKNVQLVLDPSLALLSRRQRKLIRQNPGILHAIAAGLHTAIKECKWQFRNRRWNCPTTHSPNVFGKIVNRGCRETAFVFAITSAGVTHAVARSCSEGAIESCTCDYRRRGPGGPDWHWGGCSDNVEFGRMFGREFVDSSERGRDLRYLTNLHNNEAGRMTVASEMQQECKCHGMSGSCTVRTCWMRLPSFRLVGDYLKDRFDGASRVVYANKGSNRASHRADPRHLEPENPAHKLPSSRDLVYFEKSPNFCSYNGKTGTHGTSGRTCNSSSPALDGCELLCCGRGYKTRMEQVTERCHCTFHWCCHVSCLNCTSTQTVHQCL</sequence>